<proteinExistence type="inferred from homology"/>
<comment type="function">
    <text evidence="1">One of two assembly initiator proteins, it binds directly to the 5'-end of the 23S rRNA, where it nucleates assembly of the 50S subunit.</text>
</comment>
<comment type="function">
    <text evidence="1">One of the proteins that surrounds the polypeptide exit tunnel on the outside of the subunit.</text>
</comment>
<comment type="subunit">
    <text evidence="1">Part of the 50S ribosomal subunit.</text>
</comment>
<comment type="similarity">
    <text evidence="1">Belongs to the universal ribosomal protein uL24 family.</text>
</comment>
<gene>
    <name evidence="1" type="primary">rplX</name>
    <name type="ordered locus">Asuc_0470</name>
</gene>
<name>RL24_ACTSZ</name>
<accession>A6VLJ9</accession>
<organism>
    <name type="scientific">Actinobacillus succinogenes (strain ATCC 55618 / DSM 22257 / CCUG 43843 / 130Z)</name>
    <dbReference type="NCBI Taxonomy" id="339671"/>
    <lineage>
        <taxon>Bacteria</taxon>
        <taxon>Pseudomonadati</taxon>
        <taxon>Pseudomonadota</taxon>
        <taxon>Gammaproteobacteria</taxon>
        <taxon>Pasteurellales</taxon>
        <taxon>Pasteurellaceae</taxon>
        <taxon>Actinobacillus</taxon>
    </lineage>
</organism>
<protein>
    <recommendedName>
        <fullName evidence="1">Large ribosomal subunit protein uL24</fullName>
    </recommendedName>
    <alternativeName>
        <fullName evidence="2">50S ribosomal protein L24</fullName>
    </alternativeName>
</protein>
<evidence type="ECO:0000255" key="1">
    <source>
        <dbReference type="HAMAP-Rule" id="MF_01326"/>
    </source>
</evidence>
<evidence type="ECO:0000305" key="2"/>
<reference key="1">
    <citation type="journal article" date="2010" name="BMC Genomics">
        <title>A genomic perspective on the potential of Actinobacillus succinogenes for industrial succinate production.</title>
        <authorList>
            <person name="McKinlay J.B."/>
            <person name="Laivenieks M."/>
            <person name="Schindler B.D."/>
            <person name="McKinlay A.A."/>
            <person name="Siddaramappa S."/>
            <person name="Challacombe J.F."/>
            <person name="Lowry S.R."/>
            <person name="Clum A."/>
            <person name="Lapidus A.L."/>
            <person name="Burkhart K.B."/>
            <person name="Harkins V."/>
            <person name="Vieille C."/>
        </authorList>
    </citation>
    <scope>NUCLEOTIDE SEQUENCE [LARGE SCALE GENOMIC DNA]</scope>
    <source>
        <strain>ATCC 55618 / DSM 22257 / CCUG 43843 / 130Z</strain>
    </source>
</reference>
<feature type="chain" id="PRO_1000073257" description="Large ribosomal subunit protein uL24">
    <location>
        <begin position="1"/>
        <end position="103"/>
    </location>
</feature>
<keyword id="KW-1185">Reference proteome</keyword>
<keyword id="KW-0687">Ribonucleoprotein</keyword>
<keyword id="KW-0689">Ribosomal protein</keyword>
<keyword id="KW-0694">RNA-binding</keyword>
<keyword id="KW-0699">rRNA-binding</keyword>
<dbReference type="EMBL" id="CP000746">
    <property type="protein sequence ID" value="ABR73846.1"/>
    <property type="molecule type" value="Genomic_DNA"/>
</dbReference>
<dbReference type="RefSeq" id="WP_012072228.1">
    <property type="nucleotide sequence ID" value="NC_009655.1"/>
</dbReference>
<dbReference type="SMR" id="A6VLJ9"/>
<dbReference type="STRING" id="339671.Asuc_0470"/>
<dbReference type="GeneID" id="86156428"/>
<dbReference type="KEGG" id="asu:Asuc_0470"/>
<dbReference type="eggNOG" id="COG0198">
    <property type="taxonomic scope" value="Bacteria"/>
</dbReference>
<dbReference type="HOGENOM" id="CLU_093315_2_2_6"/>
<dbReference type="OrthoDB" id="9807419at2"/>
<dbReference type="Proteomes" id="UP000001114">
    <property type="component" value="Chromosome"/>
</dbReference>
<dbReference type="GO" id="GO:1990904">
    <property type="term" value="C:ribonucleoprotein complex"/>
    <property type="evidence" value="ECO:0007669"/>
    <property type="project" value="UniProtKB-KW"/>
</dbReference>
<dbReference type="GO" id="GO:0005840">
    <property type="term" value="C:ribosome"/>
    <property type="evidence" value="ECO:0007669"/>
    <property type="project" value="UniProtKB-KW"/>
</dbReference>
<dbReference type="GO" id="GO:0019843">
    <property type="term" value="F:rRNA binding"/>
    <property type="evidence" value="ECO:0007669"/>
    <property type="project" value="UniProtKB-UniRule"/>
</dbReference>
<dbReference type="GO" id="GO:0003735">
    <property type="term" value="F:structural constituent of ribosome"/>
    <property type="evidence" value="ECO:0007669"/>
    <property type="project" value="InterPro"/>
</dbReference>
<dbReference type="GO" id="GO:0006412">
    <property type="term" value="P:translation"/>
    <property type="evidence" value="ECO:0007669"/>
    <property type="project" value="UniProtKB-UniRule"/>
</dbReference>
<dbReference type="CDD" id="cd06089">
    <property type="entry name" value="KOW_RPL26"/>
    <property type="match status" value="1"/>
</dbReference>
<dbReference type="FunFam" id="2.30.30.30:FF:000004">
    <property type="entry name" value="50S ribosomal protein L24"/>
    <property type="match status" value="1"/>
</dbReference>
<dbReference type="Gene3D" id="2.30.30.30">
    <property type="match status" value="1"/>
</dbReference>
<dbReference type="HAMAP" id="MF_01326_B">
    <property type="entry name" value="Ribosomal_uL24_B"/>
    <property type="match status" value="1"/>
</dbReference>
<dbReference type="InterPro" id="IPR005824">
    <property type="entry name" value="KOW"/>
</dbReference>
<dbReference type="InterPro" id="IPR014722">
    <property type="entry name" value="Rib_uL2_dom2"/>
</dbReference>
<dbReference type="InterPro" id="IPR003256">
    <property type="entry name" value="Ribosomal_uL24"/>
</dbReference>
<dbReference type="InterPro" id="IPR005825">
    <property type="entry name" value="Ribosomal_uL24_CS"/>
</dbReference>
<dbReference type="InterPro" id="IPR041988">
    <property type="entry name" value="Ribosomal_uL24_KOW"/>
</dbReference>
<dbReference type="InterPro" id="IPR008991">
    <property type="entry name" value="Translation_prot_SH3-like_sf"/>
</dbReference>
<dbReference type="NCBIfam" id="TIGR01079">
    <property type="entry name" value="rplX_bact"/>
    <property type="match status" value="1"/>
</dbReference>
<dbReference type="PANTHER" id="PTHR12903">
    <property type="entry name" value="MITOCHONDRIAL RIBOSOMAL PROTEIN L24"/>
    <property type="match status" value="1"/>
</dbReference>
<dbReference type="Pfam" id="PF00467">
    <property type="entry name" value="KOW"/>
    <property type="match status" value="1"/>
</dbReference>
<dbReference type="Pfam" id="PF17136">
    <property type="entry name" value="ribosomal_L24"/>
    <property type="match status" value="1"/>
</dbReference>
<dbReference type="SMART" id="SM00739">
    <property type="entry name" value="KOW"/>
    <property type="match status" value="1"/>
</dbReference>
<dbReference type="SUPFAM" id="SSF50104">
    <property type="entry name" value="Translation proteins SH3-like domain"/>
    <property type="match status" value="1"/>
</dbReference>
<dbReference type="PROSITE" id="PS01108">
    <property type="entry name" value="RIBOSOMAL_L24"/>
    <property type="match status" value="1"/>
</dbReference>
<sequence length="103" mass="11279">MAAKIRQNDEVIVLAGKDKGKRGKVTQVLPNGKVIVEGVKIITKHEKPVPALGKEGGLVKKEAPIDASNVAIFNPKTNKADRVGFRFEDGKKVRFFKSNNEII</sequence>